<keyword id="KW-0963">Cytoplasm</keyword>
<keyword id="KW-0444">Lipid biosynthesis</keyword>
<keyword id="KW-0443">Lipid metabolism</keyword>
<keyword id="KW-0520">NAD</keyword>
<keyword id="KW-0521">NADP</keyword>
<keyword id="KW-0547">Nucleotide-binding</keyword>
<keyword id="KW-0560">Oxidoreductase</keyword>
<keyword id="KW-0594">Phospholipid biosynthesis</keyword>
<keyword id="KW-1208">Phospholipid metabolism</keyword>
<keyword id="KW-1185">Reference proteome</keyword>
<dbReference type="EC" id="1.1.1.94" evidence="1"/>
<dbReference type="EMBL" id="AL123456">
    <property type="protein sequence ID" value="CCP43302.1"/>
    <property type="molecule type" value="Genomic_DNA"/>
</dbReference>
<dbReference type="PIR" id="C70932">
    <property type="entry name" value="C70932"/>
</dbReference>
<dbReference type="RefSeq" id="NP_215078.1">
    <property type="nucleotide sequence ID" value="NC_000962.3"/>
</dbReference>
<dbReference type="RefSeq" id="WP_003900965.1">
    <property type="nucleotide sequence ID" value="NZ_NVQJ01000036.1"/>
</dbReference>
<dbReference type="SMR" id="P9WN75"/>
<dbReference type="FunCoup" id="P9WN75">
    <property type="interactions" value="192"/>
</dbReference>
<dbReference type="STRING" id="83332.Rv0564c"/>
<dbReference type="PaxDb" id="83332-Rv0564c"/>
<dbReference type="DNASU" id="887651"/>
<dbReference type="GeneID" id="887651"/>
<dbReference type="KEGG" id="mtu:Rv0564c"/>
<dbReference type="KEGG" id="mtv:RVBD_0564c"/>
<dbReference type="PATRIC" id="fig|83332.111.peg.621"/>
<dbReference type="TubercuList" id="Rv0564c"/>
<dbReference type="eggNOG" id="COG0240">
    <property type="taxonomic scope" value="Bacteria"/>
</dbReference>
<dbReference type="InParanoid" id="P9WN75"/>
<dbReference type="OrthoDB" id="9812273at2"/>
<dbReference type="PhylomeDB" id="P9WN75"/>
<dbReference type="UniPathway" id="UPA00940"/>
<dbReference type="Proteomes" id="UP000001584">
    <property type="component" value="Chromosome"/>
</dbReference>
<dbReference type="GO" id="GO:0005829">
    <property type="term" value="C:cytosol"/>
    <property type="evidence" value="ECO:0000318"/>
    <property type="project" value="GO_Central"/>
</dbReference>
<dbReference type="GO" id="GO:0047952">
    <property type="term" value="F:glycerol-3-phosphate dehydrogenase [NAD(P)+] activity"/>
    <property type="evidence" value="ECO:0000318"/>
    <property type="project" value="GO_Central"/>
</dbReference>
<dbReference type="GO" id="GO:0051287">
    <property type="term" value="F:NAD binding"/>
    <property type="evidence" value="ECO:0007669"/>
    <property type="project" value="InterPro"/>
</dbReference>
<dbReference type="GO" id="GO:0005975">
    <property type="term" value="P:carbohydrate metabolic process"/>
    <property type="evidence" value="ECO:0007669"/>
    <property type="project" value="InterPro"/>
</dbReference>
<dbReference type="GO" id="GO:0046167">
    <property type="term" value="P:glycerol-3-phosphate biosynthetic process"/>
    <property type="evidence" value="ECO:0007669"/>
    <property type="project" value="UniProtKB-UniRule"/>
</dbReference>
<dbReference type="GO" id="GO:0046168">
    <property type="term" value="P:glycerol-3-phosphate catabolic process"/>
    <property type="evidence" value="ECO:0007669"/>
    <property type="project" value="InterPro"/>
</dbReference>
<dbReference type="GO" id="GO:0006072">
    <property type="term" value="P:glycerol-3-phosphate metabolic process"/>
    <property type="evidence" value="ECO:0000318"/>
    <property type="project" value="GO_Central"/>
</dbReference>
<dbReference type="GO" id="GO:0006650">
    <property type="term" value="P:glycerophospholipid metabolic process"/>
    <property type="evidence" value="ECO:0007669"/>
    <property type="project" value="UniProtKB-UniRule"/>
</dbReference>
<dbReference type="GO" id="GO:0008654">
    <property type="term" value="P:phospholipid biosynthetic process"/>
    <property type="evidence" value="ECO:0007669"/>
    <property type="project" value="UniProtKB-KW"/>
</dbReference>
<dbReference type="FunFam" id="1.10.1040.10:FF:000037">
    <property type="entry name" value="Glycerol-3-phosphate dehydrogenase [NAD(P)+]"/>
    <property type="match status" value="1"/>
</dbReference>
<dbReference type="FunFam" id="3.40.50.720:FF:000384">
    <property type="entry name" value="Glycerol-3-phosphate dehydrogenase [NAD(P)+]"/>
    <property type="match status" value="1"/>
</dbReference>
<dbReference type="Gene3D" id="1.10.1040.10">
    <property type="entry name" value="N-(1-d-carboxylethyl)-l-norvaline Dehydrogenase, domain 2"/>
    <property type="match status" value="1"/>
</dbReference>
<dbReference type="Gene3D" id="3.40.50.720">
    <property type="entry name" value="NAD(P)-binding Rossmann-like Domain"/>
    <property type="match status" value="1"/>
</dbReference>
<dbReference type="HAMAP" id="MF_00394">
    <property type="entry name" value="NAD_Glyc3P_dehydrog"/>
    <property type="match status" value="1"/>
</dbReference>
<dbReference type="InterPro" id="IPR008927">
    <property type="entry name" value="6-PGluconate_DH-like_C_sf"/>
</dbReference>
<dbReference type="InterPro" id="IPR013328">
    <property type="entry name" value="6PGD_dom2"/>
</dbReference>
<dbReference type="InterPro" id="IPR006168">
    <property type="entry name" value="G3P_DH_NAD-dep"/>
</dbReference>
<dbReference type="InterPro" id="IPR006109">
    <property type="entry name" value="G3P_DH_NAD-dep_C"/>
</dbReference>
<dbReference type="InterPro" id="IPR011128">
    <property type="entry name" value="G3P_DH_NAD-dep_N"/>
</dbReference>
<dbReference type="InterPro" id="IPR036291">
    <property type="entry name" value="NAD(P)-bd_dom_sf"/>
</dbReference>
<dbReference type="NCBIfam" id="NF000940">
    <property type="entry name" value="PRK00094.1-2"/>
    <property type="match status" value="1"/>
</dbReference>
<dbReference type="NCBIfam" id="NF000942">
    <property type="entry name" value="PRK00094.1-4"/>
    <property type="match status" value="1"/>
</dbReference>
<dbReference type="NCBIfam" id="NF009098">
    <property type="entry name" value="PRK12439.1"/>
    <property type="match status" value="1"/>
</dbReference>
<dbReference type="PANTHER" id="PTHR11728">
    <property type="entry name" value="GLYCEROL-3-PHOSPHATE DEHYDROGENASE"/>
    <property type="match status" value="1"/>
</dbReference>
<dbReference type="PANTHER" id="PTHR11728:SF1">
    <property type="entry name" value="GLYCEROL-3-PHOSPHATE DEHYDROGENASE [NAD(+)] 2, CHLOROPLASTIC"/>
    <property type="match status" value="1"/>
</dbReference>
<dbReference type="Pfam" id="PF07479">
    <property type="entry name" value="NAD_Gly3P_dh_C"/>
    <property type="match status" value="1"/>
</dbReference>
<dbReference type="Pfam" id="PF01210">
    <property type="entry name" value="NAD_Gly3P_dh_N"/>
    <property type="match status" value="1"/>
</dbReference>
<dbReference type="PIRSF" id="PIRSF000114">
    <property type="entry name" value="Glycerol-3-P_dh"/>
    <property type="match status" value="1"/>
</dbReference>
<dbReference type="PRINTS" id="PR00077">
    <property type="entry name" value="GPDHDRGNASE"/>
</dbReference>
<dbReference type="SUPFAM" id="SSF48179">
    <property type="entry name" value="6-phosphogluconate dehydrogenase C-terminal domain-like"/>
    <property type="match status" value="1"/>
</dbReference>
<dbReference type="SUPFAM" id="SSF51735">
    <property type="entry name" value="NAD(P)-binding Rossmann-fold domains"/>
    <property type="match status" value="1"/>
</dbReference>
<dbReference type="PROSITE" id="PS00957">
    <property type="entry name" value="NAD_G3PDH"/>
    <property type="match status" value="1"/>
</dbReference>
<proteinExistence type="evidence at protein level"/>
<feature type="chain" id="PRO_0000137997" description="Glycerol-3-phosphate dehydrogenase [NAD(P)+] 1">
    <location>
        <begin position="1"/>
        <end position="341"/>
    </location>
</feature>
<feature type="active site" description="Proton acceptor" evidence="1">
    <location>
        <position position="195"/>
    </location>
</feature>
<feature type="binding site" evidence="1">
    <location>
        <position position="17"/>
    </location>
    <ligand>
        <name>NADPH</name>
        <dbReference type="ChEBI" id="CHEBI:57783"/>
    </ligand>
</feature>
<feature type="binding site" evidence="1">
    <location>
        <position position="18"/>
    </location>
    <ligand>
        <name>NADPH</name>
        <dbReference type="ChEBI" id="CHEBI:57783"/>
    </ligand>
</feature>
<feature type="binding site" evidence="1">
    <location>
        <position position="37"/>
    </location>
    <ligand>
        <name>NADPH</name>
        <dbReference type="ChEBI" id="CHEBI:57783"/>
    </ligand>
</feature>
<feature type="binding site" evidence="1">
    <location>
        <position position="112"/>
    </location>
    <ligand>
        <name>NADPH</name>
        <dbReference type="ChEBI" id="CHEBI:57783"/>
    </ligand>
</feature>
<feature type="binding site" evidence="1">
    <location>
        <position position="112"/>
    </location>
    <ligand>
        <name>sn-glycerol 3-phosphate</name>
        <dbReference type="ChEBI" id="CHEBI:57597"/>
    </ligand>
</feature>
<feature type="binding site" evidence="1">
    <location>
        <position position="140"/>
    </location>
    <ligand>
        <name>sn-glycerol 3-phosphate</name>
        <dbReference type="ChEBI" id="CHEBI:57597"/>
    </ligand>
</feature>
<feature type="binding site" evidence="1">
    <location>
        <position position="144"/>
    </location>
    <ligand>
        <name>NADPH</name>
        <dbReference type="ChEBI" id="CHEBI:57783"/>
    </ligand>
</feature>
<feature type="binding site" evidence="1">
    <location>
        <position position="195"/>
    </location>
    <ligand>
        <name>sn-glycerol 3-phosphate</name>
        <dbReference type="ChEBI" id="CHEBI:57597"/>
    </ligand>
</feature>
<feature type="binding site" evidence="1">
    <location>
        <position position="248"/>
    </location>
    <ligand>
        <name>sn-glycerol 3-phosphate</name>
        <dbReference type="ChEBI" id="CHEBI:57597"/>
    </ligand>
</feature>
<feature type="binding site" evidence="1">
    <location>
        <position position="258"/>
    </location>
    <ligand>
        <name>sn-glycerol 3-phosphate</name>
        <dbReference type="ChEBI" id="CHEBI:57597"/>
    </ligand>
</feature>
<feature type="binding site" evidence="1">
    <location>
        <position position="259"/>
    </location>
    <ligand>
        <name>NADPH</name>
        <dbReference type="ChEBI" id="CHEBI:57783"/>
    </ligand>
</feature>
<feature type="binding site" evidence="1">
    <location>
        <position position="259"/>
    </location>
    <ligand>
        <name>sn-glycerol 3-phosphate</name>
        <dbReference type="ChEBI" id="CHEBI:57597"/>
    </ligand>
</feature>
<feature type="binding site" evidence="1">
    <location>
        <position position="260"/>
    </location>
    <ligand>
        <name>sn-glycerol 3-phosphate</name>
        <dbReference type="ChEBI" id="CHEBI:57597"/>
    </ligand>
</feature>
<feature type="binding site" evidence="1">
    <location>
        <position position="283"/>
    </location>
    <ligand>
        <name>NADPH</name>
        <dbReference type="ChEBI" id="CHEBI:57783"/>
    </ligand>
</feature>
<feature type="binding site" evidence="1">
    <location>
        <position position="285"/>
    </location>
    <ligand>
        <name>NADPH</name>
        <dbReference type="ChEBI" id="CHEBI:57783"/>
    </ligand>
</feature>
<accession>P9WN75</accession>
<accession>L0T722</accession>
<accession>O53761</accession>
<accession>P64188</accession>
<comment type="function">
    <text evidence="1">Catalyzes the reduction of the glycolytic intermediate dihydroxyacetone phosphate (DHAP) to sn-glycerol 3-phosphate (G3P), the key precursor for phospholipid synthesis.</text>
</comment>
<comment type="catalytic activity">
    <reaction evidence="1">
        <text>sn-glycerol 3-phosphate + NAD(+) = dihydroxyacetone phosphate + NADH + H(+)</text>
        <dbReference type="Rhea" id="RHEA:11092"/>
        <dbReference type="ChEBI" id="CHEBI:15378"/>
        <dbReference type="ChEBI" id="CHEBI:57540"/>
        <dbReference type="ChEBI" id="CHEBI:57597"/>
        <dbReference type="ChEBI" id="CHEBI:57642"/>
        <dbReference type="ChEBI" id="CHEBI:57945"/>
        <dbReference type="EC" id="1.1.1.94"/>
    </reaction>
    <physiologicalReaction direction="right-to-left" evidence="1">
        <dbReference type="Rhea" id="RHEA:11094"/>
    </physiologicalReaction>
</comment>
<comment type="catalytic activity">
    <reaction evidence="1">
        <text>sn-glycerol 3-phosphate + NADP(+) = dihydroxyacetone phosphate + NADPH + H(+)</text>
        <dbReference type="Rhea" id="RHEA:11096"/>
        <dbReference type="ChEBI" id="CHEBI:15378"/>
        <dbReference type="ChEBI" id="CHEBI:57597"/>
        <dbReference type="ChEBI" id="CHEBI:57642"/>
        <dbReference type="ChEBI" id="CHEBI:57783"/>
        <dbReference type="ChEBI" id="CHEBI:58349"/>
        <dbReference type="EC" id="1.1.1.94"/>
    </reaction>
    <physiologicalReaction direction="right-to-left" evidence="1">
        <dbReference type="Rhea" id="RHEA:11098"/>
    </physiologicalReaction>
</comment>
<comment type="pathway">
    <text evidence="1">Membrane lipid metabolism; glycerophospholipid metabolism.</text>
</comment>
<comment type="subcellular location">
    <subcellularLocation>
        <location evidence="1">Cytoplasm</location>
    </subcellularLocation>
</comment>
<comment type="similarity">
    <text evidence="1">Belongs to the NAD-dependent glycerol-3-phosphate dehydrogenase family.</text>
</comment>
<name>GPDA1_MYCTU</name>
<organism>
    <name type="scientific">Mycobacterium tuberculosis (strain ATCC 25618 / H37Rv)</name>
    <dbReference type="NCBI Taxonomy" id="83332"/>
    <lineage>
        <taxon>Bacteria</taxon>
        <taxon>Bacillati</taxon>
        <taxon>Actinomycetota</taxon>
        <taxon>Actinomycetes</taxon>
        <taxon>Mycobacteriales</taxon>
        <taxon>Mycobacteriaceae</taxon>
        <taxon>Mycobacterium</taxon>
        <taxon>Mycobacterium tuberculosis complex</taxon>
    </lineage>
</organism>
<evidence type="ECO:0000255" key="1">
    <source>
        <dbReference type="HAMAP-Rule" id="MF_00394"/>
    </source>
</evidence>
<sequence>MAANKREPKVVVLGGGSWGTTVASICARRGPTLQWVRSAVTAQDINDNHRNSRYLGNDVVLSDTLRATTDFTEAANCADVVVMGVPSHGFRGVLVELSKELRPWVPVVSLVKGLEQGTNMRMSQIIEEVLPGHPAGILAGPNIAREVAEGYAAAAVLAMPDQHLATRLSAMFRTRRFRVYTTDDVVGVETAGALKNVFAIAVGMGYSLGIGENTRALVIARALREMTKLGVAMGGKSETFPGLAGLGDLIVTCTSQRSRNRHVGEQLGAGKPIDEIIASMSQVAEGVKAAGVVMEFANEFGLNMPIAREVDAVINHGSTVEQAYRGLIAEVPGHEVHGSGF</sequence>
<reference key="1">
    <citation type="journal article" date="1998" name="Nature">
        <title>Deciphering the biology of Mycobacterium tuberculosis from the complete genome sequence.</title>
        <authorList>
            <person name="Cole S.T."/>
            <person name="Brosch R."/>
            <person name="Parkhill J."/>
            <person name="Garnier T."/>
            <person name="Churcher C.M."/>
            <person name="Harris D.E."/>
            <person name="Gordon S.V."/>
            <person name="Eiglmeier K."/>
            <person name="Gas S."/>
            <person name="Barry C.E. III"/>
            <person name="Tekaia F."/>
            <person name="Badcock K."/>
            <person name="Basham D."/>
            <person name="Brown D."/>
            <person name="Chillingworth T."/>
            <person name="Connor R."/>
            <person name="Davies R.M."/>
            <person name="Devlin K."/>
            <person name="Feltwell T."/>
            <person name="Gentles S."/>
            <person name="Hamlin N."/>
            <person name="Holroyd S."/>
            <person name="Hornsby T."/>
            <person name="Jagels K."/>
            <person name="Krogh A."/>
            <person name="McLean J."/>
            <person name="Moule S."/>
            <person name="Murphy L.D."/>
            <person name="Oliver S."/>
            <person name="Osborne J."/>
            <person name="Quail M.A."/>
            <person name="Rajandream M.A."/>
            <person name="Rogers J."/>
            <person name="Rutter S."/>
            <person name="Seeger K."/>
            <person name="Skelton S."/>
            <person name="Squares S."/>
            <person name="Squares R."/>
            <person name="Sulston J.E."/>
            <person name="Taylor K."/>
            <person name="Whitehead S."/>
            <person name="Barrell B.G."/>
        </authorList>
    </citation>
    <scope>NUCLEOTIDE SEQUENCE [LARGE SCALE GENOMIC DNA]</scope>
    <source>
        <strain>ATCC 25618 / H37Rv</strain>
    </source>
</reference>
<reference key="2">
    <citation type="journal article" date="2011" name="Mol. Cell. Proteomics">
        <title>Proteogenomic analysis of Mycobacterium tuberculosis by high resolution mass spectrometry.</title>
        <authorList>
            <person name="Kelkar D.S."/>
            <person name="Kumar D."/>
            <person name="Kumar P."/>
            <person name="Balakrishnan L."/>
            <person name="Muthusamy B."/>
            <person name="Yadav A.K."/>
            <person name="Shrivastava P."/>
            <person name="Marimuthu A."/>
            <person name="Anand S."/>
            <person name="Sundaram H."/>
            <person name="Kingsbury R."/>
            <person name="Harsha H.C."/>
            <person name="Nair B."/>
            <person name="Prasad T.S."/>
            <person name="Chauhan D.S."/>
            <person name="Katoch K."/>
            <person name="Katoch V.M."/>
            <person name="Kumar P."/>
            <person name="Chaerkady R."/>
            <person name="Ramachandran S."/>
            <person name="Dash D."/>
            <person name="Pandey A."/>
        </authorList>
    </citation>
    <scope>IDENTIFICATION BY MASS SPECTROMETRY [LARGE SCALE ANALYSIS]</scope>
    <source>
        <strain>ATCC 25618 / H37Rv</strain>
    </source>
</reference>
<protein>
    <recommendedName>
        <fullName evidence="1">Glycerol-3-phosphate dehydrogenase [NAD(P)+] 1</fullName>
        <ecNumber evidence="1">1.1.1.94</ecNumber>
    </recommendedName>
    <alternativeName>
        <fullName evidence="1">NAD(P)(+)-dependent glycerol-3-phosphate dehydrogenase 1</fullName>
    </alternativeName>
    <alternativeName>
        <fullName evidence="1">NAD(P)H-dependent dihydroxyacetone-phosphate reductase 1</fullName>
    </alternativeName>
</protein>
<gene>
    <name evidence="1" type="primary">gpsA1</name>
    <name type="synonym">gpdA1</name>
    <name type="ordered locus">Rv0564c</name>
    <name type="ORF">MTV039.02c</name>
</gene>